<organism>
    <name type="scientific">Hyperthermus butylicus (strain DSM 5456 / JCM 9403 / PLM1-5)</name>
    <dbReference type="NCBI Taxonomy" id="415426"/>
    <lineage>
        <taxon>Archaea</taxon>
        <taxon>Thermoproteota</taxon>
        <taxon>Thermoprotei</taxon>
        <taxon>Desulfurococcales</taxon>
        <taxon>Pyrodictiaceae</taxon>
        <taxon>Hyperthermus</taxon>
    </lineage>
</organism>
<proteinExistence type="inferred from homology"/>
<comment type="similarity">
    <text evidence="1">Belongs to the eukaryotic ribosomal protein eL39 family.</text>
</comment>
<gene>
    <name evidence="1" type="primary">rpl39e</name>
    <name type="ordered locus">Hbut_1597</name>
</gene>
<name>RL39_HYPBU</name>
<protein>
    <recommendedName>
        <fullName evidence="1">Large ribosomal subunit protein eL39</fullName>
    </recommendedName>
    <alternativeName>
        <fullName evidence="2">50S ribosomal protein L39e</fullName>
    </alternativeName>
</protein>
<sequence length="51" mass="6284">MAHFKPLGKKLRLAKALKQNRSVPIWVIIKTNRRFRDHPKRRHWRRTKLKA</sequence>
<evidence type="ECO:0000255" key="1">
    <source>
        <dbReference type="HAMAP-Rule" id="MF_00629"/>
    </source>
</evidence>
<evidence type="ECO:0000305" key="2"/>
<accession>A2BN55</accession>
<feature type="chain" id="PRO_1000051683" description="Large ribosomal subunit protein eL39">
    <location>
        <begin position="1"/>
        <end position="51"/>
    </location>
</feature>
<reference key="1">
    <citation type="journal article" date="2007" name="Archaea">
        <title>The genome of Hyperthermus butylicus: a sulfur-reducing, peptide fermenting, neutrophilic Crenarchaeote growing up to 108 degrees C.</title>
        <authorList>
            <person name="Bruegger K."/>
            <person name="Chen L."/>
            <person name="Stark M."/>
            <person name="Zibat A."/>
            <person name="Redder P."/>
            <person name="Ruepp A."/>
            <person name="Awayez M."/>
            <person name="She Q."/>
            <person name="Garrett R.A."/>
            <person name="Klenk H.-P."/>
        </authorList>
    </citation>
    <scope>NUCLEOTIDE SEQUENCE [LARGE SCALE GENOMIC DNA]</scope>
    <source>
        <strain>DSM 5456 / JCM 9403 / PLM1-5</strain>
    </source>
</reference>
<keyword id="KW-1185">Reference proteome</keyword>
<keyword id="KW-0687">Ribonucleoprotein</keyword>
<keyword id="KW-0689">Ribosomal protein</keyword>
<dbReference type="EMBL" id="CP000493">
    <property type="protein sequence ID" value="ABM81416.1"/>
    <property type="molecule type" value="Genomic_DNA"/>
</dbReference>
<dbReference type="RefSeq" id="WP_011822734.1">
    <property type="nucleotide sequence ID" value="NC_008818.1"/>
</dbReference>
<dbReference type="SMR" id="A2BN55"/>
<dbReference type="STRING" id="415426.Hbut_1597"/>
<dbReference type="EnsemblBacteria" id="ABM81416">
    <property type="protein sequence ID" value="ABM81416"/>
    <property type="gene ID" value="Hbut_1597"/>
</dbReference>
<dbReference type="GeneID" id="4781661"/>
<dbReference type="KEGG" id="hbu:Hbut_1597"/>
<dbReference type="eggNOG" id="arCOG04177">
    <property type="taxonomic scope" value="Archaea"/>
</dbReference>
<dbReference type="HOGENOM" id="CLU_181948_4_0_2"/>
<dbReference type="OrthoDB" id="65887at2157"/>
<dbReference type="Proteomes" id="UP000002593">
    <property type="component" value="Chromosome"/>
</dbReference>
<dbReference type="GO" id="GO:1990904">
    <property type="term" value="C:ribonucleoprotein complex"/>
    <property type="evidence" value="ECO:0007669"/>
    <property type="project" value="UniProtKB-KW"/>
</dbReference>
<dbReference type="GO" id="GO:0005840">
    <property type="term" value="C:ribosome"/>
    <property type="evidence" value="ECO:0007669"/>
    <property type="project" value="UniProtKB-KW"/>
</dbReference>
<dbReference type="GO" id="GO:0003735">
    <property type="term" value="F:structural constituent of ribosome"/>
    <property type="evidence" value="ECO:0007669"/>
    <property type="project" value="InterPro"/>
</dbReference>
<dbReference type="GO" id="GO:0006412">
    <property type="term" value="P:translation"/>
    <property type="evidence" value="ECO:0007669"/>
    <property type="project" value="UniProtKB-UniRule"/>
</dbReference>
<dbReference type="FunFam" id="1.10.1620.10:FF:000001">
    <property type="entry name" value="60S ribosomal protein-like L39"/>
    <property type="match status" value="1"/>
</dbReference>
<dbReference type="Gene3D" id="1.10.1620.10">
    <property type="entry name" value="Ribosomal protein L39e"/>
    <property type="match status" value="1"/>
</dbReference>
<dbReference type="HAMAP" id="MF_00629">
    <property type="entry name" value="Ribosomal_eL39"/>
    <property type="match status" value="1"/>
</dbReference>
<dbReference type="InterPro" id="IPR000077">
    <property type="entry name" value="Ribosomal_eL39"/>
</dbReference>
<dbReference type="InterPro" id="IPR020083">
    <property type="entry name" value="Ribosomal_eL39_CS"/>
</dbReference>
<dbReference type="InterPro" id="IPR023626">
    <property type="entry name" value="Ribosomal_eL39_dom_sf"/>
</dbReference>
<dbReference type="NCBIfam" id="NF002316">
    <property type="entry name" value="PRK01242.1"/>
    <property type="match status" value="1"/>
</dbReference>
<dbReference type="Pfam" id="PF00832">
    <property type="entry name" value="Ribosomal_L39"/>
    <property type="match status" value="1"/>
</dbReference>
<dbReference type="SUPFAM" id="SSF48662">
    <property type="entry name" value="Ribosomal protein L39e"/>
    <property type="match status" value="1"/>
</dbReference>
<dbReference type="PROSITE" id="PS00051">
    <property type="entry name" value="RIBOSOMAL_L39E"/>
    <property type="match status" value="1"/>
</dbReference>